<keyword id="KW-0963">Cytoplasm</keyword>
<keyword id="KW-0396">Initiation factor</keyword>
<keyword id="KW-0648">Protein biosynthesis</keyword>
<keyword id="KW-0694">RNA-binding</keyword>
<keyword id="KW-0699">rRNA-binding</keyword>
<reference key="1">
    <citation type="submission" date="2006-06" db="EMBL/GenBank/DDBJ databases">
        <title>Complete sequence of chromosome of Mesorhizobium sp. BNC1.</title>
        <authorList>
            <consortium name="US DOE Joint Genome Institute"/>
            <person name="Copeland A."/>
            <person name="Lucas S."/>
            <person name="Lapidus A."/>
            <person name="Barry K."/>
            <person name="Detter J.C."/>
            <person name="Glavina del Rio T."/>
            <person name="Hammon N."/>
            <person name="Israni S."/>
            <person name="Dalin E."/>
            <person name="Tice H."/>
            <person name="Pitluck S."/>
            <person name="Chertkov O."/>
            <person name="Brettin T."/>
            <person name="Bruce D."/>
            <person name="Han C."/>
            <person name="Tapia R."/>
            <person name="Gilna P."/>
            <person name="Schmutz J."/>
            <person name="Larimer F."/>
            <person name="Land M."/>
            <person name="Hauser L."/>
            <person name="Kyrpides N."/>
            <person name="Mikhailova N."/>
            <person name="Richardson P."/>
        </authorList>
    </citation>
    <scope>NUCLEOTIDE SEQUENCE [LARGE SCALE GENOMIC DNA]</scope>
    <source>
        <strain>BNC1</strain>
    </source>
</reference>
<name>IF1_CHESB</name>
<accession>Q11LY3</accession>
<gene>
    <name evidence="1" type="primary">infA</name>
    <name type="ordered locus">Meso_0187</name>
</gene>
<feature type="chain" id="PRO_0000263818" description="Translation initiation factor IF-1">
    <location>
        <begin position="1"/>
        <end position="72"/>
    </location>
</feature>
<feature type="domain" description="S1-like" evidence="1">
    <location>
        <begin position="1"/>
        <end position="72"/>
    </location>
</feature>
<dbReference type="EMBL" id="CP000390">
    <property type="protein sequence ID" value="ABG61592.1"/>
    <property type="molecule type" value="Genomic_DNA"/>
</dbReference>
<dbReference type="SMR" id="Q11LY3"/>
<dbReference type="STRING" id="266779.Meso_0187"/>
<dbReference type="KEGG" id="mes:Meso_0187"/>
<dbReference type="eggNOG" id="COG0361">
    <property type="taxonomic scope" value="Bacteria"/>
</dbReference>
<dbReference type="HOGENOM" id="CLU_151267_1_0_5"/>
<dbReference type="OrthoDB" id="9803250at2"/>
<dbReference type="GO" id="GO:0005829">
    <property type="term" value="C:cytosol"/>
    <property type="evidence" value="ECO:0007669"/>
    <property type="project" value="TreeGrafter"/>
</dbReference>
<dbReference type="GO" id="GO:0043022">
    <property type="term" value="F:ribosome binding"/>
    <property type="evidence" value="ECO:0007669"/>
    <property type="project" value="UniProtKB-UniRule"/>
</dbReference>
<dbReference type="GO" id="GO:0019843">
    <property type="term" value="F:rRNA binding"/>
    <property type="evidence" value="ECO:0007669"/>
    <property type="project" value="UniProtKB-UniRule"/>
</dbReference>
<dbReference type="GO" id="GO:0003743">
    <property type="term" value="F:translation initiation factor activity"/>
    <property type="evidence" value="ECO:0007669"/>
    <property type="project" value="UniProtKB-UniRule"/>
</dbReference>
<dbReference type="CDD" id="cd04451">
    <property type="entry name" value="S1_IF1"/>
    <property type="match status" value="1"/>
</dbReference>
<dbReference type="FunFam" id="2.40.50.140:FF:000002">
    <property type="entry name" value="Translation initiation factor IF-1"/>
    <property type="match status" value="1"/>
</dbReference>
<dbReference type="Gene3D" id="2.40.50.140">
    <property type="entry name" value="Nucleic acid-binding proteins"/>
    <property type="match status" value="1"/>
</dbReference>
<dbReference type="HAMAP" id="MF_00075">
    <property type="entry name" value="IF_1"/>
    <property type="match status" value="1"/>
</dbReference>
<dbReference type="InterPro" id="IPR012340">
    <property type="entry name" value="NA-bd_OB-fold"/>
</dbReference>
<dbReference type="InterPro" id="IPR006196">
    <property type="entry name" value="RNA-binding_domain_S1_IF1"/>
</dbReference>
<dbReference type="InterPro" id="IPR003029">
    <property type="entry name" value="S1_domain"/>
</dbReference>
<dbReference type="InterPro" id="IPR004368">
    <property type="entry name" value="TIF_IF1"/>
</dbReference>
<dbReference type="NCBIfam" id="TIGR00008">
    <property type="entry name" value="infA"/>
    <property type="match status" value="1"/>
</dbReference>
<dbReference type="PANTHER" id="PTHR33370">
    <property type="entry name" value="TRANSLATION INITIATION FACTOR IF-1, CHLOROPLASTIC"/>
    <property type="match status" value="1"/>
</dbReference>
<dbReference type="PANTHER" id="PTHR33370:SF1">
    <property type="entry name" value="TRANSLATION INITIATION FACTOR IF-1, CHLOROPLASTIC"/>
    <property type="match status" value="1"/>
</dbReference>
<dbReference type="Pfam" id="PF01176">
    <property type="entry name" value="eIF-1a"/>
    <property type="match status" value="1"/>
</dbReference>
<dbReference type="SMART" id="SM00316">
    <property type="entry name" value="S1"/>
    <property type="match status" value="1"/>
</dbReference>
<dbReference type="SUPFAM" id="SSF50249">
    <property type="entry name" value="Nucleic acid-binding proteins"/>
    <property type="match status" value="1"/>
</dbReference>
<dbReference type="PROSITE" id="PS50832">
    <property type="entry name" value="S1_IF1_TYPE"/>
    <property type="match status" value="1"/>
</dbReference>
<evidence type="ECO:0000255" key="1">
    <source>
        <dbReference type="HAMAP-Rule" id="MF_00075"/>
    </source>
</evidence>
<protein>
    <recommendedName>
        <fullName evidence="1">Translation initiation factor IF-1</fullName>
    </recommendedName>
</protein>
<organism>
    <name type="scientific">Chelativorans sp. (strain BNC1)</name>
    <dbReference type="NCBI Taxonomy" id="266779"/>
    <lineage>
        <taxon>Bacteria</taxon>
        <taxon>Pseudomonadati</taxon>
        <taxon>Pseudomonadota</taxon>
        <taxon>Alphaproteobacteria</taxon>
        <taxon>Hyphomicrobiales</taxon>
        <taxon>Phyllobacteriaceae</taxon>
        <taxon>Chelativorans</taxon>
    </lineage>
</organism>
<sequence length="72" mass="8414">MPKEEVLEFPGVVTELLPNAMFRVKLENDHEIIAHTAGRMRKNRIRVLTGDKVLVEMTPYDLTKGRITYRFK</sequence>
<proteinExistence type="inferred from homology"/>
<comment type="function">
    <text evidence="1">One of the essential components for the initiation of protein synthesis. Stabilizes the binding of IF-2 and IF-3 on the 30S subunit to which N-formylmethionyl-tRNA(fMet) subsequently binds. Helps modulate mRNA selection, yielding the 30S pre-initiation complex (PIC). Upon addition of the 50S ribosomal subunit IF-1, IF-2 and IF-3 are released leaving the mature 70S translation initiation complex.</text>
</comment>
<comment type="subunit">
    <text evidence="1">Component of the 30S ribosomal translation pre-initiation complex which assembles on the 30S ribosome in the order IF-2 and IF-3, IF-1 and N-formylmethionyl-tRNA(fMet); mRNA recruitment can occur at any time during PIC assembly.</text>
</comment>
<comment type="subcellular location">
    <subcellularLocation>
        <location evidence="1">Cytoplasm</location>
    </subcellularLocation>
</comment>
<comment type="similarity">
    <text evidence="1">Belongs to the IF-1 family.</text>
</comment>